<evidence type="ECO:0000255" key="1">
    <source>
        <dbReference type="HAMAP-Rule" id="MF_01456"/>
    </source>
</evidence>
<evidence type="ECO:0000269" key="2">
    <source>
    </source>
</evidence>
<evidence type="ECO:0000303" key="3">
    <source>
    </source>
</evidence>
<evidence type="ECO:0000305" key="4">
    <source>
    </source>
</evidence>
<organism>
    <name type="scientific">Paracoccus denitrificans</name>
    <dbReference type="NCBI Taxonomy" id="266"/>
    <lineage>
        <taxon>Bacteria</taxon>
        <taxon>Pseudomonadati</taxon>
        <taxon>Pseudomonadota</taxon>
        <taxon>Alphaproteobacteria</taxon>
        <taxon>Rhodobacterales</taxon>
        <taxon>Paracoccaceae</taxon>
        <taxon>Paracoccus</taxon>
    </lineage>
</organism>
<dbReference type="EC" id="7.1.1.-" evidence="1"/>
<dbReference type="EMBL" id="L02354">
    <property type="protein sequence ID" value="AAA25597.1"/>
    <property type="molecule type" value="Genomic_DNA"/>
</dbReference>
<dbReference type="PIR" id="G45456">
    <property type="entry name" value="G45456"/>
</dbReference>
<dbReference type="SMR" id="P29923"/>
<dbReference type="TCDB" id="3.D.1.2.1">
    <property type="family name" value="the h+ or na+-translocating nadh dehydrogenase (ndh) family"/>
</dbReference>
<dbReference type="OMA" id="IPMEHGL"/>
<dbReference type="GO" id="GO:0030964">
    <property type="term" value="C:NADH dehydrogenase complex"/>
    <property type="evidence" value="ECO:0007669"/>
    <property type="project" value="TreeGrafter"/>
</dbReference>
<dbReference type="GO" id="GO:0005886">
    <property type="term" value="C:plasma membrane"/>
    <property type="evidence" value="ECO:0007669"/>
    <property type="project" value="UniProtKB-SubCell"/>
</dbReference>
<dbReference type="GO" id="GO:0050136">
    <property type="term" value="F:NADH:ubiquinone reductase (non-electrogenic) activity"/>
    <property type="evidence" value="ECO:0007669"/>
    <property type="project" value="UniProtKB-UniRule"/>
</dbReference>
<dbReference type="GO" id="GO:0048038">
    <property type="term" value="F:quinone binding"/>
    <property type="evidence" value="ECO:0007669"/>
    <property type="project" value="UniProtKB-KW"/>
</dbReference>
<dbReference type="GO" id="GO:0042773">
    <property type="term" value="P:ATP synthesis coupled electron transport"/>
    <property type="evidence" value="ECO:0007669"/>
    <property type="project" value="InterPro"/>
</dbReference>
<dbReference type="FunFam" id="1.10.287.3510:FF:000001">
    <property type="entry name" value="NADH-quinone oxidoreductase subunit K"/>
    <property type="match status" value="1"/>
</dbReference>
<dbReference type="Gene3D" id="1.10.287.3510">
    <property type="match status" value="1"/>
</dbReference>
<dbReference type="HAMAP" id="MF_01456">
    <property type="entry name" value="NDH1_NuoK"/>
    <property type="match status" value="1"/>
</dbReference>
<dbReference type="InterPro" id="IPR001133">
    <property type="entry name" value="NADH_UbQ_OxRdtase_chain4L/K"/>
</dbReference>
<dbReference type="InterPro" id="IPR039428">
    <property type="entry name" value="NUOK/Mnh_C1-like"/>
</dbReference>
<dbReference type="NCBIfam" id="NF004320">
    <property type="entry name" value="PRK05715.1-2"/>
    <property type="match status" value="1"/>
</dbReference>
<dbReference type="NCBIfam" id="NF004321">
    <property type="entry name" value="PRK05715.1-3"/>
    <property type="match status" value="1"/>
</dbReference>
<dbReference type="NCBIfam" id="NF004323">
    <property type="entry name" value="PRK05715.1-5"/>
    <property type="match status" value="1"/>
</dbReference>
<dbReference type="PANTHER" id="PTHR11434:SF21">
    <property type="entry name" value="NADH DEHYDROGENASE SUBUNIT 4L-RELATED"/>
    <property type="match status" value="1"/>
</dbReference>
<dbReference type="PANTHER" id="PTHR11434">
    <property type="entry name" value="NADH-UBIQUINONE OXIDOREDUCTASE SUBUNIT ND4L"/>
    <property type="match status" value="1"/>
</dbReference>
<dbReference type="Pfam" id="PF00420">
    <property type="entry name" value="Oxidored_q2"/>
    <property type="match status" value="1"/>
</dbReference>
<accession>P29923</accession>
<name>NQO11_PARDE</name>
<keyword id="KW-0997">Cell inner membrane</keyword>
<keyword id="KW-1003">Cell membrane</keyword>
<keyword id="KW-0472">Membrane</keyword>
<keyword id="KW-0520">NAD</keyword>
<keyword id="KW-0874">Quinone</keyword>
<keyword id="KW-1278">Translocase</keyword>
<keyword id="KW-0812">Transmembrane</keyword>
<keyword id="KW-1133">Transmembrane helix</keyword>
<keyword id="KW-0813">Transport</keyword>
<keyword id="KW-0830">Ubiquinone</keyword>
<sequence>MIGLTHYLVVGAILFVTGIFGIFVNRKNVIVILMSIELMLLAVNINFVAFSTHLGDLAGQVFTMFVLTVAAAEAAIGLAILVVFFRNRGTIAVEDVNVMKG</sequence>
<reference key="1">
    <citation type="journal article" date="1993" name="Biochemistry">
        <title>DNA sequencing of the seven remaining structural genes of the gene cluster encoding the energy-transducing NADH-quinone oxidoreductase of Paracoccus denitrificans.</title>
        <authorList>
            <person name="Xu X."/>
            <person name="Matsuno-Yagi A."/>
            <person name="Yagi T."/>
        </authorList>
    </citation>
    <scope>NUCLEOTIDE SEQUENCE [GENOMIC DNA]</scope>
    <source>
        <strain>ATCC 13543 / NRRL B-3784 / NRC 449</strain>
    </source>
</reference>
<reference key="2">
    <citation type="journal article" date="2002" name="Biochemistry">
        <title>Characterization of the membrane domain Nqo11 subunit of the proton-translocating NADH-quinone oxidoreductase of Paracoccus denitrificans.</title>
        <authorList>
            <person name="Kao M.-C."/>
            <person name="Di Bernardo S."/>
            <person name="Matsuno-Yagi A."/>
            <person name="Yagi T."/>
        </authorList>
    </citation>
    <scope>SUBCELLULAR LOCATION</scope>
    <scope>TOPOLOGY</scope>
</reference>
<comment type="function">
    <text>NDH-1 shuttles electrons from NADH, via FMN and iron-sulfur (Fe-S) centers, to quinones in the respiratory chain. The immediate electron acceptor for the enzyme in this species is believed to be ubiquinone. Couples the redox reaction to proton translocation (for every two electrons transferred, four hydrogen ions are translocated across the cytoplasmic membrane), and thus conserves the redox energy in a proton gradient.</text>
</comment>
<comment type="catalytic activity">
    <reaction evidence="1">
        <text>a quinone + NADH + 5 H(+)(in) = a quinol + NAD(+) + 4 H(+)(out)</text>
        <dbReference type="Rhea" id="RHEA:57888"/>
        <dbReference type="ChEBI" id="CHEBI:15378"/>
        <dbReference type="ChEBI" id="CHEBI:24646"/>
        <dbReference type="ChEBI" id="CHEBI:57540"/>
        <dbReference type="ChEBI" id="CHEBI:57945"/>
        <dbReference type="ChEBI" id="CHEBI:132124"/>
    </reaction>
</comment>
<comment type="subunit">
    <text>NDH-1 is composed of at least 14 different subunits, Nqo1 to Nqo14. The complex has a L-shaped structure, with the hydrophobic arm (subunits Nqo7, Nqo8, Nqo10 to Nqo14) embedded in the inner membrane and the hydrophilic peripheral arm (subunits Nqo1 to Nqo6, Nqo9) protruding into the bacterial cytoplasm. The hydrophilic domain contains all the redox centers.</text>
</comment>
<comment type="subcellular location">
    <subcellularLocation>
        <location evidence="1 2">Cell inner membrane</location>
        <topology evidence="1 2">Multi-pass membrane protein</topology>
    </subcellularLocation>
</comment>
<comment type="similarity">
    <text evidence="1">Belongs to the complex I subunit 4L family.</text>
</comment>
<proteinExistence type="evidence at protein level"/>
<protein>
    <recommendedName>
        <fullName>NADH-quinone oxidoreductase subunit 11</fullName>
        <ecNumber evidence="1">7.1.1.-</ecNumber>
    </recommendedName>
    <alternativeName>
        <fullName>NADH dehydrogenase I, subunit 11</fullName>
    </alternativeName>
    <alternativeName>
        <fullName>NDH-1, subunit 11</fullName>
    </alternativeName>
</protein>
<feature type="chain" id="PRO_0000118522" description="NADH-quinone oxidoreductase subunit 11">
    <location>
        <begin position="1"/>
        <end position="101"/>
    </location>
</feature>
<feature type="topological domain" description="Periplasmic" evidence="4">
    <location>
        <begin position="1"/>
        <end position="3"/>
    </location>
</feature>
<feature type="transmembrane region" description="Helical" evidence="1">
    <location>
        <begin position="4"/>
        <end position="24"/>
    </location>
</feature>
<feature type="topological domain" description="Cytoplasmic" evidence="4">
    <location>
        <begin position="25"/>
        <end position="29"/>
    </location>
</feature>
<feature type="transmembrane region" description="Helical" evidence="1">
    <location>
        <begin position="30"/>
        <end position="50"/>
    </location>
</feature>
<feature type="topological domain" description="Periplasmic" evidence="4">
    <location>
        <begin position="51"/>
        <end position="64"/>
    </location>
</feature>
<feature type="transmembrane region" description="Helical" evidence="1">
    <location>
        <begin position="65"/>
        <end position="85"/>
    </location>
</feature>
<feature type="topological domain" description="Cytoplasmic" evidence="2">
    <location>
        <begin position="86"/>
        <end position="101"/>
    </location>
</feature>
<gene>
    <name evidence="3" type="primary">nqo11</name>
</gene>